<comment type="function">
    <text evidence="1">Produces ATP from ADP in the presence of a proton gradient across the membrane.</text>
</comment>
<comment type="subunit">
    <text evidence="1">F-type ATPases have 2 components, CF(1) - the catalytic core - and CF(0) - the membrane proton channel. CF(1) has five subunits: alpha(3), beta(3), gamma(1), delta(1), epsilon(1). CF(0) has three main subunits: a, b and c.</text>
</comment>
<comment type="subcellular location">
    <subcellularLocation>
        <location evidence="1">Cell membrane</location>
        <topology evidence="1">Peripheral membrane protein</topology>
    </subcellularLocation>
</comment>
<comment type="similarity">
    <text evidence="1">Belongs to the ATPase epsilon chain family.</text>
</comment>
<organism>
    <name type="scientific">Listeria welshimeri serovar 6b (strain ATCC 35897 / DSM 20650 / CCUG 15529 / CIP 8149 / NCTC 11857 / SLCC 5334 / V8)</name>
    <dbReference type="NCBI Taxonomy" id="386043"/>
    <lineage>
        <taxon>Bacteria</taxon>
        <taxon>Bacillati</taxon>
        <taxon>Bacillota</taxon>
        <taxon>Bacilli</taxon>
        <taxon>Bacillales</taxon>
        <taxon>Listeriaceae</taxon>
        <taxon>Listeria</taxon>
    </lineage>
</organism>
<dbReference type="EMBL" id="AM263198">
    <property type="protein sequence ID" value="CAK21894.1"/>
    <property type="molecule type" value="Genomic_DNA"/>
</dbReference>
<dbReference type="RefSeq" id="WP_011703208.1">
    <property type="nucleotide sequence ID" value="NC_008555.1"/>
</dbReference>
<dbReference type="SMR" id="A0ALL2"/>
<dbReference type="STRING" id="386043.lwe2476"/>
<dbReference type="GeneID" id="61190395"/>
<dbReference type="KEGG" id="lwe:lwe2476"/>
<dbReference type="eggNOG" id="COG0355">
    <property type="taxonomic scope" value="Bacteria"/>
</dbReference>
<dbReference type="HOGENOM" id="CLU_084338_1_0_9"/>
<dbReference type="OrthoDB" id="9804110at2"/>
<dbReference type="Proteomes" id="UP000000779">
    <property type="component" value="Chromosome"/>
</dbReference>
<dbReference type="GO" id="GO:0005886">
    <property type="term" value="C:plasma membrane"/>
    <property type="evidence" value="ECO:0007669"/>
    <property type="project" value="UniProtKB-SubCell"/>
</dbReference>
<dbReference type="GO" id="GO:0045259">
    <property type="term" value="C:proton-transporting ATP synthase complex"/>
    <property type="evidence" value="ECO:0007669"/>
    <property type="project" value="UniProtKB-KW"/>
</dbReference>
<dbReference type="GO" id="GO:0005524">
    <property type="term" value="F:ATP binding"/>
    <property type="evidence" value="ECO:0007669"/>
    <property type="project" value="UniProtKB-UniRule"/>
</dbReference>
<dbReference type="GO" id="GO:0046933">
    <property type="term" value="F:proton-transporting ATP synthase activity, rotational mechanism"/>
    <property type="evidence" value="ECO:0007669"/>
    <property type="project" value="UniProtKB-UniRule"/>
</dbReference>
<dbReference type="CDD" id="cd12152">
    <property type="entry name" value="F1-ATPase_delta"/>
    <property type="match status" value="1"/>
</dbReference>
<dbReference type="FunFam" id="1.20.5.440:FF:000001">
    <property type="entry name" value="ATP synthase epsilon chain"/>
    <property type="match status" value="1"/>
</dbReference>
<dbReference type="FunFam" id="2.60.15.10:FF:000001">
    <property type="entry name" value="ATP synthase epsilon chain"/>
    <property type="match status" value="1"/>
</dbReference>
<dbReference type="Gene3D" id="1.20.5.440">
    <property type="entry name" value="ATP synthase delta/epsilon subunit, C-terminal domain"/>
    <property type="match status" value="1"/>
</dbReference>
<dbReference type="Gene3D" id="2.60.15.10">
    <property type="entry name" value="F0F1 ATP synthase delta/epsilon subunit, N-terminal"/>
    <property type="match status" value="1"/>
</dbReference>
<dbReference type="HAMAP" id="MF_00530">
    <property type="entry name" value="ATP_synth_epsil_bac"/>
    <property type="match status" value="1"/>
</dbReference>
<dbReference type="InterPro" id="IPR036794">
    <property type="entry name" value="ATP_F1_dsu/esu_C_sf"/>
</dbReference>
<dbReference type="InterPro" id="IPR001469">
    <property type="entry name" value="ATP_synth_F1_dsu/esu"/>
</dbReference>
<dbReference type="InterPro" id="IPR020546">
    <property type="entry name" value="ATP_synth_F1_dsu/esu_N"/>
</dbReference>
<dbReference type="InterPro" id="IPR020547">
    <property type="entry name" value="ATP_synth_F1_esu_C"/>
</dbReference>
<dbReference type="InterPro" id="IPR036771">
    <property type="entry name" value="ATPsynth_dsu/esu_N"/>
</dbReference>
<dbReference type="NCBIfam" id="TIGR01216">
    <property type="entry name" value="ATP_synt_epsi"/>
    <property type="match status" value="1"/>
</dbReference>
<dbReference type="NCBIfam" id="NF001846">
    <property type="entry name" value="PRK00571.1-3"/>
    <property type="match status" value="1"/>
</dbReference>
<dbReference type="PANTHER" id="PTHR13822">
    <property type="entry name" value="ATP SYNTHASE DELTA/EPSILON CHAIN"/>
    <property type="match status" value="1"/>
</dbReference>
<dbReference type="PANTHER" id="PTHR13822:SF10">
    <property type="entry name" value="ATP SYNTHASE EPSILON CHAIN, CHLOROPLASTIC"/>
    <property type="match status" value="1"/>
</dbReference>
<dbReference type="Pfam" id="PF00401">
    <property type="entry name" value="ATP-synt_DE"/>
    <property type="match status" value="1"/>
</dbReference>
<dbReference type="Pfam" id="PF02823">
    <property type="entry name" value="ATP-synt_DE_N"/>
    <property type="match status" value="1"/>
</dbReference>
<dbReference type="SUPFAM" id="SSF46604">
    <property type="entry name" value="Epsilon subunit of F1F0-ATP synthase C-terminal domain"/>
    <property type="match status" value="1"/>
</dbReference>
<dbReference type="SUPFAM" id="SSF51344">
    <property type="entry name" value="Epsilon subunit of F1F0-ATP synthase N-terminal domain"/>
    <property type="match status" value="1"/>
</dbReference>
<feature type="chain" id="PRO_1000056501" description="ATP synthase epsilon chain">
    <location>
        <begin position="1"/>
        <end position="134"/>
    </location>
</feature>
<name>ATPE_LISW6</name>
<gene>
    <name evidence="1" type="primary">atpC</name>
    <name type="ordered locus">lwe2476</name>
</gene>
<sequence>MGSLNVSIVTPDGPVYEGVAQMVIARTKAGELGILPGHVPLVAPLKIDIVRLKVESGEEWVAVGGGFMEVNGEEVNILADTAEREQDIDIDRAEKAKQRAEAELSRAKEQKVDEVMAQLALQKAINRIHAKEHS</sequence>
<keyword id="KW-0066">ATP synthesis</keyword>
<keyword id="KW-1003">Cell membrane</keyword>
<keyword id="KW-0139">CF(1)</keyword>
<keyword id="KW-0375">Hydrogen ion transport</keyword>
<keyword id="KW-0406">Ion transport</keyword>
<keyword id="KW-0472">Membrane</keyword>
<keyword id="KW-0813">Transport</keyword>
<evidence type="ECO:0000255" key="1">
    <source>
        <dbReference type="HAMAP-Rule" id="MF_00530"/>
    </source>
</evidence>
<reference key="1">
    <citation type="journal article" date="2006" name="J. Bacteriol.">
        <title>Whole-genome sequence of Listeria welshimeri reveals common steps in genome reduction with Listeria innocua as compared to Listeria monocytogenes.</title>
        <authorList>
            <person name="Hain T."/>
            <person name="Steinweg C."/>
            <person name="Kuenne C.T."/>
            <person name="Billion A."/>
            <person name="Ghai R."/>
            <person name="Chatterjee S.S."/>
            <person name="Domann E."/>
            <person name="Kaerst U."/>
            <person name="Goesmann A."/>
            <person name="Bekel T."/>
            <person name="Bartels D."/>
            <person name="Kaiser O."/>
            <person name="Meyer F."/>
            <person name="Puehler A."/>
            <person name="Weisshaar B."/>
            <person name="Wehland J."/>
            <person name="Liang C."/>
            <person name="Dandekar T."/>
            <person name="Lampidis R."/>
            <person name="Kreft J."/>
            <person name="Goebel W."/>
            <person name="Chakraborty T."/>
        </authorList>
    </citation>
    <scope>NUCLEOTIDE SEQUENCE [LARGE SCALE GENOMIC DNA]</scope>
    <source>
        <strain>ATCC 35897 / DSM 20650 / CCUG 15529 / CIP 8149 / NCTC 11857 / SLCC 5334 / V8</strain>
    </source>
</reference>
<accession>A0ALL2</accession>
<proteinExistence type="inferred from homology"/>
<protein>
    <recommendedName>
        <fullName evidence="1">ATP synthase epsilon chain</fullName>
    </recommendedName>
    <alternativeName>
        <fullName evidence="1">ATP synthase F1 sector epsilon subunit</fullName>
    </alternativeName>
    <alternativeName>
        <fullName evidence="1">F-ATPase epsilon subunit</fullName>
    </alternativeName>
</protein>